<name>DARP_PSEPG</name>
<proteinExistence type="inferred from homology"/>
<sequence>MVDSNNDAFDGEKSKTQIKRELHELVELGERLTTLKADTLARLPLTDELRKALAEASKHTAHGARKRHMSFVGKLMRVQDLDAIHALLEQMDSSSRQYNERFHSLERWRDRLIDGNDEDLERFVNEYPDTDRQQLRSLVRHAQHEKARNKPPAAARKVFKYIRDLDELQRGLR</sequence>
<organism>
    <name type="scientific">Pseudomonas putida (strain GB-1)</name>
    <dbReference type="NCBI Taxonomy" id="76869"/>
    <lineage>
        <taxon>Bacteria</taxon>
        <taxon>Pseudomonadati</taxon>
        <taxon>Pseudomonadota</taxon>
        <taxon>Gammaproteobacteria</taxon>
        <taxon>Pseudomonadales</taxon>
        <taxon>Pseudomonadaceae</taxon>
        <taxon>Pseudomonas</taxon>
    </lineage>
</organism>
<protein>
    <recommendedName>
        <fullName evidence="1">Dual-action ribosomal maturation protein DarP</fullName>
    </recommendedName>
    <alternativeName>
        <fullName evidence="1">Large ribosomal subunit assembly factor DarP</fullName>
    </alternativeName>
</protein>
<reference key="1">
    <citation type="submission" date="2008-01" db="EMBL/GenBank/DDBJ databases">
        <title>Complete sequence of Pseudomonas putida GB-1.</title>
        <authorList>
            <consortium name="US DOE Joint Genome Institute"/>
            <person name="Copeland A."/>
            <person name="Lucas S."/>
            <person name="Lapidus A."/>
            <person name="Barry K."/>
            <person name="Glavina del Rio T."/>
            <person name="Dalin E."/>
            <person name="Tice H."/>
            <person name="Pitluck S."/>
            <person name="Bruce D."/>
            <person name="Goodwin L."/>
            <person name="Chertkov O."/>
            <person name="Brettin T."/>
            <person name="Detter J.C."/>
            <person name="Han C."/>
            <person name="Kuske C.R."/>
            <person name="Schmutz J."/>
            <person name="Larimer F."/>
            <person name="Land M."/>
            <person name="Hauser L."/>
            <person name="Kyrpides N."/>
            <person name="Kim E."/>
            <person name="McCarthy J.K."/>
            <person name="Richardson P."/>
        </authorList>
    </citation>
    <scope>NUCLEOTIDE SEQUENCE [LARGE SCALE GENOMIC DNA]</scope>
    <source>
        <strain>GB-1</strain>
    </source>
</reference>
<evidence type="ECO:0000255" key="1">
    <source>
        <dbReference type="HAMAP-Rule" id="MF_00765"/>
    </source>
</evidence>
<keyword id="KW-0963">Cytoplasm</keyword>
<keyword id="KW-0690">Ribosome biogenesis</keyword>
<keyword id="KW-0694">RNA-binding</keyword>
<keyword id="KW-0699">rRNA-binding</keyword>
<gene>
    <name evidence="1" type="primary">darP</name>
    <name type="ordered locus">PputGB1_0948</name>
</gene>
<accession>B0KQH0</accession>
<comment type="function">
    <text evidence="1">Member of a network of 50S ribosomal subunit biogenesis factors which assembles along the 30S-50S interface, preventing incorrect 23S rRNA structures from forming. Promotes peptidyl transferase center (PTC) maturation.</text>
</comment>
<comment type="subcellular location">
    <subcellularLocation>
        <location evidence="1">Cytoplasm</location>
    </subcellularLocation>
    <text evidence="1">Associates with late stage pre-50S ribosomal subunits.</text>
</comment>
<comment type="similarity">
    <text evidence="1">Belongs to the DarP family.</text>
</comment>
<dbReference type="EMBL" id="CP000926">
    <property type="protein sequence ID" value="ABY96858.1"/>
    <property type="molecule type" value="Genomic_DNA"/>
</dbReference>
<dbReference type="SMR" id="B0KQH0"/>
<dbReference type="KEGG" id="ppg:PputGB1_0948"/>
<dbReference type="eggNOG" id="COG3028">
    <property type="taxonomic scope" value="Bacteria"/>
</dbReference>
<dbReference type="HOGENOM" id="CLU_106757_4_0_6"/>
<dbReference type="Proteomes" id="UP000002157">
    <property type="component" value="Chromosome"/>
</dbReference>
<dbReference type="GO" id="GO:0005829">
    <property type="term" value="C:cytosol"/>
    <property type="evidence" value="ECO:0007669"/>
    <property type="project" value="TreeGrafter"/>
</dbReference>
<dbReference type="GO" id="GO:0043022">
    <property type="term" value="F:ribosome binding"/>
    <property type="evidence" value="ECO:0007669"/>
    <property type="project" value="UniProtKB-UniRule"/>
</dbReference>
<dbReference type="GO" id="GO:0019843">
    <property type="term" value="F:rRNA binding"/>
    <property type="evidence" value="ECO:0007669"/>
    <property type="project" value="UniProtKB-UniRule"/>
</dbReference>
<dbReference type="GO" id="GO:1902626">
    <property type="term" value="P:assembly of large subunit precursor of preribosome"/>
    <property type="evidence" value="ECO:0007669"/>
    <property type="project" value="UniProtKB-UniRule"/>
</dbReference>
<dbReference type="CDD" id="cd16331">
    <property type="entry name" value="YjgA-like"/>
    <property type="match status" value="1"/>
</dbReference>
<dbReference type="FunFam" id="1.10.60.30:FF:000002">
    <property type="entry name" value="UPF0307 protein YjgA"/>
    <property type="match status" value="1"/>
</dbReference>
<dbReference type="Gene3D" id="1.10.60.30">
    <property type="entry name" value="PSPTO4464-like domains"/>
    <property type="match status" value="2"/>
</dbReference>
<dbReference type="HAMAP" id="MF_00765">
    <property type="entry name" value="DarP"/>
    <property type="match status" value="1"/>
</dbReference>
<dbReference type="InterPro" id="IPR006839">
    <property type="entry name" value="DarP"/>
</dbReference>
<dbReference type="InterPro" id="IPR023153">
    <property type="entry name" value="DarP_sf"/>
</dbReference>
<dbReference type="NCBIfam" id="NF003593">
    <property type="entry name" value="PRK05255.1-1"/>
    <property type="match status" value="1"/>
</dbReference>
<dbReference type="PANTHER" id="PTHR38101">
    <property type="entry name" value="UPF0307 PROTEIN YJGA"/>
    <property type="match status" value="1"/>
</dbReference>
<dbReference type="PANTHER" id="PTHR38101:SF1">
    <property type="entry name" value="UPF0307 PROTEIN YJGA"/>
    <property type="match status" value="1"/>
</dbReference>
<dbReference type="Pfam" id="PF04751">
    <property type="entry name" value="DarP"/>
    <property type="match status" value="1"/>
</dbReference>
<dbReference type="PIRSF" id="PIRSF016183">
    <property type="entry name" value="UCP016183"/>
    <property type="match status" value="1"/>
</dbReference>
<dbReference type="SUPFAM" id="SSF158710">
    <property type="entry name" value="PSPTO4464-like"/>
    <property type="match status" value="1"/>
</dbReference>
<feature type="chain" id="PRO_1000083535" description="Dual-action ribosomal maturation protein DarP">
    <location>
        <begin position="1"/>
        <end position="173"/>
    </location>
</feature>